<keyword id="KW-0143">Chaperone</keyword>
<keyword id="KW-0963">Cytoplasm</keyword>
<keyword id="KW-1185">Reference proteome</keyword>
<keyword id="KW-0346">Stress response</keyword>
<evidence type="ECO:0000255" key="1">
    <source>
        <dbReference type="HAMAP-Rule" id="MF_01151"/>
    </source>
</evidence>
<evidence type="ECO:0000256" key="2">
    <source>
        <dbReference type="SAM" id="MobiDB-lite"/>
    </source>
</evidence>
<name>GRPE_MYCLE</name>
<gene>
    <name evidence="1" type="primary">grpE</name>
    <name type="ordered locus">ML2495</name>
</gene>
<dbReference type="EMBL" id="AL583925">
    <property type="protein sequence ID" value="CAC32012.1"/>
    <property type="molecule type" value="Genomic_DNA"/>
</dbReference>
<dbReference type="PIR" id="D87221">
    <property type="entry name" value="D87221"/>
</dbReference>
<dbReference type="RefSeq" id="NP_302612.1">
    <property type="nucleotide sequence ID" value="NC_002677.1"/>
</dbReference>
<dbReference type="RefSeq" id="WP_010908931.1">
    <property type="nucleotide sequence ID" value="NC_002677.1"/>
</dbReference>
<dbReference type="SMR" id="Q9CB23"/>
<dbReference type="STRING" id="272631.gene:17576359"/>
<dbReference type="KEGG" id="mle:ML2495"/>
<dbReference type="PATRIC" id="fig|272631.5.peg.4790"/>
<dbReference type="Leproma" id="ML2495"/>
<dbReference type="eggNOG" id="COG0576">
    <property type="taxonomic scope" value="Bacteria"/>
</dbReference>
<dbReference type="HOGENOM" id="CLU_057217_4_1_11"/>
<dbReference type="OrthoDB" id="5191115at2"/>
<dbReference type="Proteomes" id="UP000000806">
    <property type="component" value="Chromosome"/>
</dbReference>
<dbReference type="GO" id="GO:0005737">
    <property type="term" value="C:cytoplasm"/>
    <property type="evidence" value="ECO:0007669"/>
    <property type="project" value="UniProtKB-SubCell"/>
</dbReference>
<dbReference type="GO" id="GO:0000774">
    <property type="term" value="F:adenyl-nucleotide exchange factor activity"/>
    <property type="evidence" value="ECO:0007669"/>
    <property type="project" value="InterPro"/>
</dbReference>
<dbReference type="GO" id="GO:0042803">
    <property type="term" value="F:protein homodimerization activity"/>
    <property type="evidence" value="ECO:0007669"/>
    <property type="project" value="InterPro"/>
</dbReference>
<dbReference type="GO" id="GO:0051087">
    <property type="term" value="F:protein-folding chaperone binding"/>
    <property type="evidence" value="ECO:0007669"/>
    <property type="project" value="InterPro"/>
</dbReference>
<dbReference type="GO" id="GO:0051082">
    <property type="term" value="F:unfolded protein binding"/>
    <property type="evidence" value="ECO:0007669"/>
    <property type="project" value="TreeGrafter"/>
</dbReference>
<dbReference type="GO" id="GO:0006457">
    <property type="term" value="P:protein folding"/>
    <property type="evidence" value="ECO:0007669"/>
    <property type="project" value="InterPro"/>
</dbReference>
<dbReference type="CDD" id="cd00446">
    <property type="entry name" value="GrpE"/>
    <property type="match status" value="1"/>
</dbReference>
<dbReference type="Gene3D" id="3.90.20.20">
    <property type="match status" value="1"/>
</dbReference>
<dbReference type="Gene3D" id="2.30.22.10">
    <property type="entry name" value="Head domain of nucleotide exchange factor GrpE"/>
    <property type="match status" value="1"/>
</dbReference>
<dbReference type="HAMAP" id="MF_01151">
    <property type="entry name" value="GrpE"/>
    <property type="match status" value="1"/>
</dbReference>
<dbReference type="InterPro" id="IPR000740">
    <property type="entry name" value="GrpE"/>
</dbReference>
<dbReference type="InterPro" id="IPR013805">
    <property type="entry name" value="GrpE_coiled_coil"/>
</dbReference>
<dbReference type="InterPro" id="IPR009012">
    <property type="entry name" value="GrpE_head"/>
</dbReference>
<dbReference type="NCBIfam" id="NF010740">
    <property type="entry name" value="PRK14142.1"/>
    <property type="match status" value="1"/>
</dbReference>
<dbReference type="NCBIfam" id="NF010761">
    <property type="entry name" value="PRK14164.1"/>
    <property type="match status" value="1"/>
</dbReference>
<dbReference type="PANTHER" id="PTHR21237">
    <property type="entry name" value="GRPE PROTEIN"/>
    <property type="match status" value="1"/>
</dbReference>
<dbReference type="PANTHER" id="PTHR21237:SF23">
    <property type="entry name" value="GRPE PROTEIN HOMOLOG, MITOCHONDRIAL"/>
    <property type="match status" value="1"/>
</dbReference>
<dbReference type="Pfam" id="PF01025">
    <property type="entry name" value="GrpE"/>
    <property type="match status" value="1"/>
</dbReference>
<dbReference type="PRINTS" id="PR00773">
    <property type="entry name" value="GRPEPROTEIN"/>
</dbReference>
<dbReference type="SUPFAM" id="SSF58014">
    <property type="entry name" value="Coiled-coil domain of nucleotide exchange factor GrpE"/>
    <property type="match status" value="1"/>
</dbReference>
<dbReference type="SUPFAM" id="SSF51064">
    <property type="entry name" value="Head domain of nucleotide exchange factor GrpE"/>
    <property type="match status" value="1"/>
</dbReference>
<dbReference type="PROSITE" id="PS01071">
    <property type="entry name" value="GRPE"/>
    <property type="match status" value="1"/>
</dbReference>
<accession>Q9CB23</accession>
<feature type="chain" id="PRO_0000113823" description="Protein GrpE">
    <location>
        <begin position="1"/>
        <end position="229"/>
    </location>
</feature>
<feature type="region of interest" description="Disordered" evidence="2">
    <location>
        <begin position="1"/>
        <end position="49"/>
    </location>
</feature>
<feature type="region of interest" description="Disordered" evidence="2">
    <location>
        <begin position="207"/>
        <end position="229"/>
    </location>
</feature>
<feature type="compositionally biased region" description="Basic and acidic residues" evidence="2">
    <location>
        <begin position="13"/>
        <end position="24"/>
    </location>
</feature>
<protein>
    <recommendedName>
        <fullName evidence="1">Protein GrpE</fullName>
    </recommendedName>
    <alternativeName>
        <fullName evidence="1">HSP-70 cofactor</fullName>
    </alternativeName>
</protein>
<sequence length="229" mass="24248">MTEGNPHEQVTVTDKRRIDPDTGEVRSIPLGDTPGGSEPAGMTDRSANSTDTMVDKVAELTSDLQRVQADFANYRKRALRDQQTASDRAKATVISQLLGVLDDFDRAREHGDLDSGPLKSVADKLMSALTGLGLVAFGVEGEDFDPVLHEAVQHEGDGGEGSKPVIGDVLRHGYKLGDQVLRHALVGVVDTIAGDGAETVAIVAPVDSTAKTEQGELGDNVTPHKEDGD</sequence>
<proteinExistence type="inferred from homology"/>
<reference key="1">
    <citation type="journal article" date="2001" name="Nature">
        <title>Massive gene decay in the leprosy bacillus.</title>
        <authorList>
            <person name="Cole S.T."/>
            <person name="Eiglmeier K."/>
            <person name="Parkhill J."/>
            <person name="James K.D."/>
            <person name="Thomson N.R."/>
            <person name="Wheeler P.R."/>
            <person name="Honore N."/>
            <person name="Garnier T."/>
            <person name="Churcher C.M."/>
            <person name="Harris D.E."/>
            <person name="Mungall K.L."/>
            <person name="Basham D."/>
            <person name="Brown D."/>
            <person name="Chillingworth T."/>
            <person name="Connor R."/>
            <person name="Davies R.M."/>
            <person name="Devlin K."/>
            <person name="Duthoy S."/>
            <person name="Feltwell T."/>
            <person name="Fraser A."/>
            <person name="Hamlin N."/>
            <person name="Holroyd S."/>
            <person name="Hornsby T."/>
            <person name="Jagels K."/>
            <person name="Lacroix C."/>
            <person name="Maclean J."/>
            <person name="Moule S."/>
            <person name="Murphy L.D."/>
            <person name="Oliver K."/>
            <person name="Quail M.A."/>
            <person name="Rajandream M.A."/>
            <person name="Rutherford K.M."/>
            <person name="Rutter S."/>
            <person name="Seeger K."/>
            <person name="Simon S."/>
            <person name="Simmonds M."/>
            <person name="Skelton J."/>
            <person name="Squares R."/>
            <person name="Squares S."/>
            <person name="Stevens K."/>
            <person name="Taylor K."/>
            <person name="Whitehead S."/>
            <person name="Woodward J.R."/>
            <person name="Barrell B.G."/>
        </authorList>
    </citation>
    <scope>NUCLEOTIDE SEQUENCE [LARGE SCALE GENOMIC DNA]</scope>
    <source>
        <strain>TN</strain>
    </source>
</reference>
<organism>
    <name type="scientific">Mycobacterium leprae (strain TN)</name>
    <dbReference type="NCBI Taxonomy" id="272631"/>
    <lineage>
        <taxon>Bacteria</taxon>
        <taxon>Bacillati</taxon>
        <taxon>Actinomycetota</taxon>
        <taxon>Actinomycetes</taxon>
        <taxon>Mycobacteriales</taxon>
        <taxon>Mycobacteriaceae</taxon>
        <taxon>Mycobacterium</taxon>
    </lineage>
</organism>
<comment type="function">
    <text evidence="1">Participates actively in the response to hyperosmotic and heat shock by preventing the aggregation of stress-denatured proteins, in association with DnaK and GrpE. It is the nucleotide exchange factor for DnaK and may function as a thermosensor. Unfolded proteins bind initially to DnaJ; upon interaction with the DnaJ-bound protein, DnaK hydrolyzes its bound ATP, resulting in the formation of a stable complex. GrpE releases ADP from DnaK; ATP binding to DnaK triggers the release of the substrate protein, thus completing the reaction cycle. Several rounds of ATP-dependent interactions between DnaJ, DnaK and GrpE are required for fully efficient folding.</text>
</comment>
<comment type="subunit">
    <text evidence="1">Homodimer.</text>
</comment>
<comment type="subcellular location">
    <subcellularLocation>
        <location evidence="1">Cytoplasm</location>
    </subcellularLocation>
</comment>
<comment type="similarity">
    <text evidence="1">Belongs to the GrpE family.</text>
</comment>